<sequence length="163" mass="17541">MNHYLTPDLCDAYPELVQVLEPMFSNFGGRDSFGGEIVTIKCFEDNSLVKEQAELKGNGKVLVVDGGGSLRCALLGDMIAEKAAKNGWEGLVIYGCIRDVDVIAQTDLGVQALASHPKKTEKRGLGDLNVPVTFAGVTFHPGQYIYADNNGVIISPSPLKMPE</sequence>
<organism>
    <name type="scientific">Pseudomonas fluorescens (strain Pf0-1)</name>
    <dbReference type="NCBI Taxonomy" id="205922"/>
    <lineage>
        <taxon>Bacteria</taxon>
        <taxon>Pseudomonadati</taxon>
        <taxon>Pseudomonadota</taxon>
        <taxon>Gammaproteobacteria</taxon>
        <taxon>Pseudomonadales</taxon>
        <taxon>Pseudomonadaceae</taxon>
        <taxon>Pseudomonas</taxon>
    </lineage>
</organism>
<comment type="function">
    <text evidence="1">Catalyzes the aldol cleavage of 4-hydroxy-4-methyl-2-oxoglutarate (HMG) into 2 molecules of pyruvate. Also contains a secondary oxaloacetate (OAA) decarboxylase activity due to the common pyruvate enolate transition state formed following C-C bond cleavage in the retro-aldol and decarboxylation reactions (By similarity).</text>
</comment>
<comment type="catalytic activity">
    <reaction>
        <text>4-hydroxy-4-methyl-2-oxoglutarate = 2 pyruvate</text>
        <dbReference type="Rhea" id="RHEA:22748"/>
        <dbReference type="ChEBI" id="CHEBI:15361"/>
        <dbReference type="ChEBI" id="CHEBI:58276"/>
        <dbReference type="EC" id="4.1.3.17"/>
    </reaction>
</comment>
<comment type="catalytic activity">
    <reaction>
        <text>oxaloacetate + H(+) = pyruvate + CO2</text>
        <dbReference type="Rhea" id="RHEA:15641"/>
        <dbReference type="ChEBI" id="CHEBI:15361"/>
        <dbReference type="ChEBI" id="CHEBI:15378"/>
        <dbReference type="ChEBI" id="CHEBI:16452"/>
        <dbReference type="ChEBI" id="CHEBI:16526"/>
        <dbReference type="EC" id="4.1.1.112"/>
    </reaction>
</comment>
<comment type="cofactor">
    <cofactor evidence="1">
        <name>a divalent metal cation</name>
        <dbReference type="ChEBI" id="CHEBI:60240"/>
    </cofactor>
    <text evidence="1">Divalent metal cation.</text>
</comment>
<comment type="subunit">
    <text evidence="1">Homotrimer.</text>
</comment>
<comment type="similarity">
    <text evidence="2">Belongs to the class II aldolase/RraA-like family.</text>
</comment>
<gene>
    <name type="ordered locus">Pfl01_1772</name>
</gene>
<proteinExistence type="inferred from homology"/>
<accession>Q3KFE1</accession>
<name>RRAAH_PSEPF</name>
<feature type="chain" id="PRO_1000013863" description="Putative 4-hydroxy-4-methyl-2-oxoglutarate aldolase">
    <location>
        <begin position="1"/>
        <end position="163"/>
    </location>
</feature>
<feature type="binding site" evidence="1">
    <location>
        <begin position="76"/>
        <end position="79"/>
    </location>
    <ligand>
        <name>substrate</name>
    </ligand>
</feature>
<feature type="binding site" evidence="1">
    <location>
        <position position="98"/>
    </location>
    <ligand>
        <name>substrate</name>
    </ligand>
</feature>
<feature type="binding site" evidence="1">
    <location>
        <position position="99"/>
    </location>
    <ligand>
        <name>a divalent metal cation</name>
        <dbReference type="ChEBI" id="CHEBI:60240"/>
    </ligand>
</feature>
<reference key="1">
    <citation type="journal article" date="2009" name="Genome Biol.">
        <title>Genomic and genetic analyses of diversity and plant interactions of Pseudomonas fluorescens.</title>
        <authorList>
            <person name="Silby M.W."/>
            <person name="Cerdeno-Tarraga A.M."/>
            <person name="Vernikos G.S."/>
            <person name="Giddens S.R."/>
            <person name="Jackson R.W."/>
            <person name="Preston G.M."/>
            <person name="Zhang X.-X."/>
            <person name="Moon C.D."/>
            <person name="Gehrig S.M."/>
            <person name="Godfrey S.A.C."/>
            <person name="Knight C.G."/>
            <person name="Malone J.G."/>
            <person name="Robinson Z."/>
            <person name="Spiers A.J."/>
            <person name="Harris S."/>
            <person name="Challis G.L."/>
            <person name="Yaxley A.M."/>
            <person name="Harris D."/>
            <person name="Seeger K."/>
            <person name="Murphy L."/>
            <person name="Rutter S."/>
            <person name="Squares R."/>
            <person name="Quail M.A."/>
            <person name="Saunders E."/>
            <person name="Mavromatis K."/>
            <person name="Brettin T.S."/>
            <person name="Bentley S.D."/>
            <person name="Hothersall J."/>
            <person name="Stephens E."/>
            <person name="Thomas C.M."/>
            <person name="Parkhill J."/>
            <person name="Levy S.B."/>
            <person name="Rainey P.B."/>
            <person name="Thomson N.R."/>
        </authorList>
    </citation>
    <scope>NUCLEOTIDE SEQUENCE [LARGE SCALE GENOMIC DNA]</scope>
    <source>
        <strain>Pf0-1</strain>
    </source>
</reference>
<protein>
    <recommendedName>
        <fullName>Putative 4-hydroxy-4-methyl-2-oxoglutarate aldolase</fullName>
        <shortName>HMG aldolase</shortName>
        <ecNumber>4.1.3.17</ecNumber>
    </recommendedName>
    <alternativeName>
        <fullName>Oxaloacetate decarboxylase</fullName>
        <shortName>OAA decarboxylase</shortName>
        <ecNumber>4.1.1.112</ecNumber>
    </alternativeName>
    <alternativeName>
        <fullName>Regulator of ribonuclease activity homolog</fullName>
    </alternativeName>
    <alternativeName>
        <fullName>RraA-like protein</fullName>
    </alternativeName>
</protein>
<evidence type="ECO:0000250" key="1"/>
<evidence type="ECO:0000305" key="2"/>
<dbReference type="EC" id="4.1.3.17"/>
<dbReference type="EC" id="4.1.1.112"/>
<dbReference type="EMBL" id="CP000094">
    <property type="protein sequence ID" value="ABA73515.1"/>
    <property type="molecule type" value="Genomic_DNA"/>
</dbReference>
<dbReference type="SMR" id="Q3KFE1"/>
<dbReference type="KEGG" id="pfo:Pfl01_1772"/>
<dbReference type="eggNOG" id="COG0684">
    <property type="taxonomic scope" value="Bacteria"/>
</dbReference>
<dbReference type="HOGENOM" id="CLU_072626_4_0_6"/>
<dbReference type="Proteomes" id="UP000002704">
    <property type="component" value="Chromosome"/>
</dbReference>
<dbReference type="GO" id="GO:0047443">
    <property type="term" value="F:4-hydroxy-4-methyl-2-oxoglutarate aldolase activity"/>
    <property type="evidence" value="ECO:0007669"/>
    <property type="project" value="UniProtKB-EC"/>
</dbReference>
<dbReference type="GO" id="GO:0046872">
    <property type="term" value="F:metal ion binding"/>
    <property type="evidence" value="ECO:0007669"/>
    <property type="project" value="UniProtKB-KW"/>
</dbReference>
<dbReference type="GO" id="GO:0008948">
    <property type="term" value="F:oxaloacetate decarboxylase activity"/>
    <property type="evidence" value="ECO:0007669"/>
    <property type="project" value="UniProtKB-EC"/>
</dbReference>
<dbReference type="GO" id="GO:0008428">
    <property type="term" value="F:ribonuclease inhibitor activity"/>
    <property type="evidence" value="ECO:0007669"/>
    <property type="project" value="InterPro"/>
</dbReference>
<dbReference type="GO" id="GO:0051252">
    <property type="term" value="P:regulation of RNA metabolic process"/>
    <property type="evidence" value="ECO:0007669"/>
    <property type="project" value="InterPro"/>
</dbReference>
<dbReference type="CDD" id="cd16841">
    <property type="entry name" value="RraA_family"/>
    <property type="match status" value="1"/>
</dbReference>
<dbReference type="Gene3D" id="3.50.30.40">
    <property type="entry name" value="Ribonuclease E inhibitor RraA/RraA-like"/>
    <property type="match status" value="1"/>
</dbReference>
<dbReference type="InterPro" id="IPR010203">
    <property type="entry name" value="RraA"/>
</dbReference>
<dbReference type="InterPro" id="IPR005493">
    <property type="entry name" value="RraA/RraA-like"/>
</dbReference>
<dbReference type="InterPro" id="IPR036704">
    <property type="entry name" value="RraA/RraA-like_sf"/>
</dbReference>
<dbReference type="NCBIfam" id="TIGR01935">
    <property type="entry name" value="NOT-MenG"/>
    <property type="match status" value="1"/>
</dbReference>
<dbReference type="NCBIfam" id="NF006875">
    <property type="entry name" value="PRK09372.1"/>
    <property type="match status" value="1"/>
</dbReference>
<dbReference type="NCBIfam" id="NF009134">
    <property type="entry name" value="PRK12487.1"/>
    <property type="match status" value="1"/>
</dbReference>
<dbReference type="PANTHER" id="PTHR33254">
    <property type="entry name" value="4-HYDROXY-4-METHYL-2-OXOGLUTARATE ALDOLASE 3-RELATED"/>
    <property type="match status" value="1"/>
</dbReference>
<dbReference type="PANTHER" id="PTHR33254:SF29">
    <property type="entry name" value="REGULATOR OF RIBONUCLEASE ACTIVITY A"/>
    <property type="match status" value="1"/>
</dbReference>
<dbReference type="Pfam" id="PF03737">
    <property type="entry name" value="RraA-like"/>
    <property type="match status" value="1"/>
</dbReference>
<dbReference type="SUPFAM" id="SSF89562">
    <property type="entry name" value="RraA-like"/>
    <property type="match status" value="1"/>
</dbReference>
<keyword id="KW-0456">Lyase</keyword>
<keyword id="KW-0479">Metal-binding</keyword>